<keyword id="KW-0067">ATP-binding</keyword>
<keyword id="KW-0963">Cytoplasm</keyword>
<keyword id="KW-0347">Helicase</keyword>
<keyword id="KW-0378">Hydrolase</keyword>
<keyword id="KW-0547">Nucleotide-binding</keyword>
<keyword id="KW-0694">RNA-binding</keyword>
<sequence>MSKTHLTEQKFSDFALHPKVVEALEKKGFHNCTPIQALALPLTLAGRDVAGQAQTGTGKTMAFLTSTFHCLLSHPAIADRKVNQPRALIMAPTRELAVQIHADAEPLAEATGLKLGLAYGGDGYDKQLKVLESGVDILIGTTGRLIDYAKQNHINLGAIQVVVLDEADRMYDLGFIKDIRWLFRRMPPANQRLNMLFSATLSYRVRELAFEQMNNAEYIEVEPEQKTGHRIKEELFYPSNEEKMRLLQTLIEEEWPDRAIIFANTKHRCEEIWGHLAADGHRVGLLTGDVAQKKRLRILDEFTRGDLDILVATDVAARGLHIPAVTHVFNYDLPDDCEDYVHRIGRTGRAGASGHSISLACEEYALNLPAIETYIGHSIPVSKYNPDALMTDLPKPLRLTRPRTGNGPRRTGAPRNRRRSG</sequence>
<evidence type="ECO:0000255" key="1">
    <source>
        <dbReference type="HAMAP-Rule" id="MF_00661"/>
    </source>
</evidence>
<evidence type="ECO:0000256" key="2">
    <source>
        <dbReference type="SAM" id="MobiDB-lite"/>
    </source>
</evidence>
<organism>
    <name type="scientific">Escherichia coli O157:H7 (strain EC4115 / EHEC)</name>
    <dbReference type="NCBI Taxonomy" id="444450"/>
    <lineage>
        <taxon>Bacteria</taxon>
        <taxon>Pseudomonadati</taxon>
        <taxon>Pseudomonadota</taxon>
        <taxon>Gammaproteobacteria</taxon>
        <taxon>Enterobacterales</taxon>
        <taxon>Enterobacteriaceae</taxon>
        <taxon>Escherichia</taxon>
    </lineage>
</organism>
<name>RHLB_ECO5E</name>
<gene>
    <name evidence="1" type="primary">rhlB</name>
    <name type="ordered locus">ECH74115_5213</name>
</gene>
<feature type="chain" id="PRO_1000131287" description="ATP-dependent RNA helicase RhlB">
    <location>
        <begin position="1"/>
        <end position="421"/>
    </location>
</feature>
<feature type="domain" description="Helicase ATP-binding" evidence="1">
    <location>
        <begin position="40"/>
        <end position="219"/>
    </location>
</feature>
<feature type="domain" description="Helicase C-terminal" evidence="1">
    <location>
        <begin position="245"/>
        <end position="390"/>
    </location>
</feature>
<feature type="region of interest" description="Disordered" evidence="2">
    <location>
        <begin position="392"/>
        <end position="421"/>
    </location>
</feature>
<feature type="short sequence motif" description="Q motif">
    <location>
        <begin position="9"/>
        <end position="37"/>
    </location>
</feature>
<feature type="short sequence motif" description="DEAD box">
    <location>
        <begin position="165"/>
        <end position="168"/>
    </location>
</feature>
<feature type="compositionally biased region" description="Low complexity" evidence="2">
    <location>
        <begin position="402"/>
        <end position="414"/>
    </location>
</feature>
<feature type="binding site" evidence="1">
    <location>
        <begin position="53"/>
        <end position="60"/>
    </location>
    <ligand>
        <name>ATP</name>
        <dbReference type="ChEBI" id="CHEBI:30616"/>
    </ligand>
</feature>
<accession>B5YY28</accession>
<protein>
    <recommendedName>
        <fullName evidence="1">ATP-dependent RNA helicase RhlB</fullName>
        <ecNumber evidence="1">3.6.4.13</ecNumber>
    </recommendedName>
</protein>
<comment type="function">
    <text evidence="1">DEAD-box RNA helicase involved in RNA degradation. Has RNA-dependent ATPase activity and unwinds double-stranded RNA.</text>
</comment>
<comment type="catalytic activity">
    <reaction evidence="1">
        <text>ATP + H2O = ADP + phosphate + H(+)</text>
        <dbReference type="Rhea" id="RHEA:13065"/>
        <dbReference type="ChEBI" id="CHEBI:15377"/>
        <dbReference type="ChEBI" id="CHEBI:15378"/>
        <dbReference type="ChEBI" id="CHEBI:30616"/>
        <dbReference type="ChEBI" id="CHEBI:43474"/>
        <dbReference type="ChEBI" id="CHEBI:456216"/>
        <dbReference type="EC" id="3.6.4.13"/>
    </reaction>
</comment>
<comment type="subunit">
    <text evidence="1">Component of the RNA degradosome, which is a multiprotein complex involved in RNA processing and mRNA degradation.</text>
</comment>
<comment type="subcellular location">
    <subcellularLocation>
        <location evidence="1">Cytoplasm</location>
    </subcellularLocation>
</comment>
<comment type="similarity">
    <text evidence="1">Belongs to the DEAD box helicase family. RhlB subfamily.</text>
</comment>
<reference key="1">
    <citation type="journal article" date="2011" name="Proc. Natl. Acad. Sci. U.S.A.">
        <title>Genomic anatomy of Escherichia coli O157:H7 outbreaks.</title>
        <authorList>
            <person name="Eppinger M."/>
            <person name="Mammel M.K."/>
            <person name="Leclerc J.E."/>
            <person name="Ravel J."/>
            <person name="Cebula T.A."/>
        </authorList>
    </citation>
    <scope>NUCLEOTIDE SEQUENCE [LARGE SCALE GENOMIC DNA]</scope>
    <source>
        <strain>EC4115 / EHEC</strain>
    </source>
</reference>
<proteinExistence type="inferred from homology"/>
<dbReference type="EC" id="3.6.4.13" evidence="1"/>
<dbReference type="EMBL" id="CP001164">
    <property type="protein sequence ID" value="ACI36339.1"/>
    <property type="molecule type" value="Genomic_DNA"/>
</dbReference>
<dbReference type="RefSeq" id="WP_000047491.1">
    <property type="nucleotide sequence ID" value="NC_011353.1"/>
</dbReference>
<dbReference type="SMR" id="B5YY28"/>
<dbReference type="KEGG" id="ecf:ECH74115_5213"/>
<dbReference type="HOGENOM" id="CLU_003041_1_3_6"/>
<dbReference type="GO" id="GO:0005829">
    <property type="term" value="C:cytosol"/>
    <property type="evidence" value="ECO:0007669"/>
    <property type="project" value="TreeGrafter"/>
</dbReference>
<dbReference type="GO" id="GO:0005524">
    <property type="term" value="F:ATP binding"/>
    <property type="evidence" value="ECO:0007669"/>
    <property type="project" value="UniProtKB-UniRule"/>
</dbReference>
<dbReference type="GO" id="GO:0016887">
    <property type="term" value="F:ATP hydrolysis activity"/>
    <property type="evidence" value="ECO:0007669"/>
    <property type="project" value="RHEA"/>
</dbReference>
<dbReference type="GO" id="GO:0003723">
    <property type="term" value="F:RNA binding"/>
    <property type="evidence" value="ECO:0007669"/>
    <property type="project" value="UniProtKB-UniRule"/>
</dbReference>
<dbReference type="GO" id="GO:0003724">
    <property type="term" value="F:RNA helicase activity"/>
    <property type="evidence" value="ECO:0007669"/>
    <property type="project" value="UniProtKB-UniRule"/>
</dbReference>
<dbReference type="GO" id="GO:0006401">
    <property type="term" value="P:RNA catabolic process"/>
    <property type="evidence" value="ECO:0007669"/>
    <property type="project" value="UniProtKB-UniRule"/>
</dbReference>
<dbReference type="CDD" id="cd00268">
    <property type="entry name" value="DEADc"/>
    <property type="match status" value="1"/>
</dbReference>
<dbReference type="CDD" id="cd18787">
    <property type="entry name" value="SF2_C_DEAD"/>
    <property type="match status" value="1"/>
</dbReference>
<dbReference type="FunFam" id="3.40.50.300:FF:000008">
    <property type="entry name" value="ATP-dependent RNA helicase RhlB"/>
    <property type="match status" value="1"/>
</dbReference>
<dbReference type="FunFam" id="3.40.50.300:FF:000312">
    <property type="entry name" value="ATP-dependent RNA helicase RhlB"/>
    <property type="match status" value="1"/>
</dbReference>
<dbReference type="Gene3D" id="3.40.50.300">
    <property type="entry name" value="P-loop containing nucleotide triphosphate hydrolases"/>
    <property type="match status" value="2"/>
</dbReference>
<dbReference type="HAMAP" id="MF_00661">
    <property type="entry name" value="DEAD_helicase_RhlB"/>
    <property type="match status" value="1"/>
</dbReference>
<dbReference type="InterPro" id="IPR011545">
    <property type="entry name" value="DEAD/DEAH_box_helicase_dom"/>
</dbReference>
<dbReference type="InterPro" id="IPR050079">
    <property type="entry name" value="DEAD_box_RNA_helicase"/>
</dbReference>
<dbReference type="InterPro" id="IPR014001">
    <property type="entry name" value="Helicase_ATP-bd"/>
</dbReference>
<dbReference type="InterPro" id="IPR001650">
    <property type="entry name" value="Helicase_C-like"/>
</dbReference>
<dbReference type="InterPro" id="IPR027417">
    <property type="entry name" value="P-loop_NTPase"/>
</dbReference>
<dbReference type="InterPro" id="IPR000629">
    <property type="entry name" value="RNA-helicase_DEAD-box_CS"/>
</dbReference>
<dbReference type="InterPro" id="IPR023554">
    <property type="entry name" value="RNA_helicase_ATP-dep_RhlB"/>
</dbReference>
<dbReference type="InterPro" id="IPR014014">
    <property type="entry name" value="RNA_helicase_DEAD_Q_motif"/>
</dbReference>
<dbReference type="NCBIfam" id="NF003419">
    <property type="entry name" value="PRK04837.1"/>
    <property type="match status" value="1"/>
</dbReference>
<dbReference type="PANTHER" id="PTHR47959:SF10">
    <property type="entry name" value="ATP-DEPENDENT RNA HELICASE RHLB"/>
    <property type="match status" value="1"/>
</dbReference>
<dbReference type="PANTHER" id="PTHR47959">
    <property type="entry name" value="ATP-DEPENDENT RNA HELICASE RHLE-RELATED"/>
    <property type="match status" value="1"/>
</dbReference>
<dbReference type="Pfam" id="PF00270">
    <property type="entry name" value="DEAD"/>
    <property type="match status" value="1"/>
</dbReference>
<dbReference type="Pfam" id="PF00271">
    <property type="entry name" value="Helicase_C"/>
    <property type="match status" value="1"/>
</dbReference>
<dbReference type="SMART" id="SM00487">
    <property type="entry name" value="DEXDc"/>
    <property type="match status" value="1"/>
</dbReference>
<dbReference type="SMART" id="SM00490">
    <property type="entry name" value="HELICc"/>
    <property type="match status" value="1"/>
</dbReference>
<dbReference type="SUPFAM" id="SSF52540">
    <property type="entry name" value="P-loop containing nucleoside triphosphate hydrolases"/>
    <property type="match status" value="1"/>
</dbReference>
<dbReference type="PROSITE" id="PS00039">
    <property type="entry name" value="DEAD_ATP_HELICASE"/>
    <property type="match status" value="1"/>
</dbReference>
<dbReference type="PROSITE" id="PS51192">
    <property type="entry name" value="HELICASE_ATP_BIND_1"/>
    <property type="match status" value="1"/>
</dbReference>
<dbReference type="PROSITE" id="PS51194">
    <property type="entry name" value="HELICASE_CTER"/>
    <property type="match status" value="1"/>
</dbReference>
<dbReference type="PROSITE" id="PS51195">
    <property type="entry name" value="Q_MOTIF"/>
    <property type="match status" value="1"/>
</dbReference>